<proteinExistence type="inferred from homology"/>
<dbReference type="EMBL" id="CP000360">
    <property type="protein sequence ID" value="ABF40228.1"/>
    <property type="molecule type" value="Genomic_DNA"/>
</dbReference>
<dbReference type="RefSeq" id="WP_011522030.1">
    <property type="nucleotide sequence ID" value="NC_008009.1"/>
</dbReference>
<dbReference type="SMR" id="Q1ISC2"/>
<dbReference type="STRING" id="204669.Acid345_1226"/>
<dbReference type="EnsemblBacteria" id="ABF40228">
    <property type="protein sequence ID" value="ABF40228"/>
    <property type="gene ID" value="Acid345_1226"/>
</dbReference>
<dbReference type="KEGG" id="aba:Acid345_1226"/>
<dbReference type="eggNOG" id="COG0087">
    <property type="taxonomic scope" value="Bacteria"/>
</dbReference>
<dbReference type="HOGENOM" id="CLU_044142_4_1_0"/>
<dbReference type="OrthoDB" id="9806135at2"/>
<dbReference type="Proteomes" id="UP000002432">
    <property type="component" value="Chromosome"/>
</dbReference>
<dbReference type="GO" id="GO:0022625">
    <property type="term" value="C:cytosolic large ribosomal subunit"/>
    <property type="evidence" value="ECO:0007669"/>
    <property type="project" value="TreeGrafter"/>
</dbReference>
<dbReference type="GO" id="GO:0019843">
    <property type="term" value="F:rRNA binding"/>
    <property type="evidence" value="ECO:0007669"/>
    <property type="project" value="UniProtKB-UniRule"/>
</dbReference>
<dbReference type="GO" id="GO:0003735">
    <property type="term" value="F:structural constituent of ribosome"/>
    <property type="evidence" value="ECO:0007669"/>
    <property type="project" value="InterPro"/>
</dbReference>
<dbReference type="GO" id="GO:0006412">
    <property type="term" value="P:translation"/>
    <property type="evidence" value="ECO:0007669"/>
    <property type="project" value="UniProtKB-UniRule"/>
</dbReference>
<dbReference type="FunFam" id="2.40.30.10:FF:000004">
    <property type="entry name" value="50S ribosomal protein L3"/>
    <property type="match status" value="1"/>
</dbReference>
<dbReference type="Gene3D" id="3.30.160.810">
    <property type="match status" value="1"/>
</dbReference>
<dbReference type="Gene3D" id="2.40.30.10">
    <property type="entry name" value="Translation factors"/>
    <property type="match status" value="1"/>
</dbReference>
<dbReference type="HAMAP" id="MF_01325_B">
    <property type="entry name" value="Ribosomal_uL3_B"/>
    <property type="match status" value="1"/>
</dbReference>
<dbReference type="InterPro" id="IPR000597">
    <property type="entry name" value="Ribosomal_uL3"/>
</dbReference>
<dbReference type="InterPro" id="IPR019927">
    <property type="entry name" value="Ribosomal_uL3_bac/org-type"/>
</dbReference>
<dbReference type="InterPro" id="IPR019926">
    <property type="entry name" value="Ribosomal_uL3_CS"/>
</dbReference>
<dbReference type="InterPro" id="IPR009000">
    <property type="entry name" value="Transl_B-barrel_sf"/>
</dbReference>
<dbReference type="NCBIfam" id="TIGR03625">
    <property type="entry name" value="L3_bact"/>
    <property type="match status" value="1"/>
</dbReference>
<dbReference type="PANTHER" id="PTHR11229">
    <property type="entry name" value="50S RIBOSOMAL PROTEIN L3"/>
    <property type="match status" value="1"/>
</dbReference>
<dbReference type="PANTHER" id="PTHR11229:SF16">
    <property type="entry name" value="LARGE RIBOSOMAL SUBUNIT PROTEIN UL3C"/>
    <property type="match status" value="1"/>
</dbReference>
<dbReference type="Pfam" id="PF00297">
    <property type="entry name" value="Ribosomal_L3"/>
    <property type="match status" value="1"/>
</dbReference>
<dbReference type="SUPFAM" id="SSF50447">
    <property type="entry name" value="Translation proteins"/>
    <property type="match status" value="1"/>
</dbReference>
<dbReference type="PROSITE" id="PS00474">
    <property type="entry name" value="RIBOSOMAL_L3"/>
    <property type="match status" value="1"/>
</dbReference>
<evidence type="ECO:0000255" key="1">
    <source>
        <dbReference type="HAMAP-Rule" id="MF_01325"/>
    </source>
</evidence>
<evidence type="ECO:0000256" key="2">
    <source>
        <dbReference type="SAM" id="MobiDB-lite"/>
    </source>
</evidence>
<evidence type="ECO:0000305" key="3"/>
<organism>
    <name type="scientific">Koribacter versatilis (strain Ellin345)</name>
    <dbReference type="NCBI Taxonomy" id="204669"/>
    <lineage>
        <taxon>Bacteria</taxon>
        <taxon>Pseudomonadati</taxon>
        <taxon>Acidobacteriota</taxon>
        <taxon>Terriglobia</taxon>
        <taxon>Terriglobales</taxon>
        <taxon>Candidatus Korobacteraceae</taxon>
        <taxon>Candidatus Korobacter</taxon>
    </lineage>
</organism>
<feature type="chain" id="PRO_1000052000" description="Large ribosomal subunit protein uL3">
    <location>
        <begin position="1"/>
        <end position="244"/>
    </location>
</feature>
<feature type="region of interest" description="Disordered" evidence="2">
    <location>
        <begin position="215"/>
        <end position="244"/>
    </location>
</feature>
<feature type="compositionally biased region" description="Basic residues" evidence="2">
    <location>
        <begin position="235"/>
        <end position="244"/>
    </location>
</feature>
<protein>
    <recommendedName>
        <fullName evidence="1">Large ribosomal subunit protein uL3</fullName>
    </recommendedName>
    <alternativeName>
        <fullName evidence="3">50S ribosomal protein L3</fullName>
    </alternativeName>
</protein>
<keyword id="KW-1185">Reference proteome</keyword>
<keyword id="KW-0687">Ribonucleoprotein</keyword>
<keyword id="KW-0689">Ribosomal protein</keyword>
<keyword id="KW-0694">RNA-binding</keyword>
<keyword id="KW-0699">rRNA-binding</keyword>
<accession>Q1ISC2</accession>
<sequence length="244" mass="26041">MINGLIGKKIGMTQLFDSKGDVRPVTVLQAGPCVITQRKTANKDGYDAAQVGLVEFVKETRLTKAQLGHLGKNDLPPVRTLHEFAIVADGPSEAESNGEVKVGDKVLVDLFEGSKFVDVTGVSKGRGFAGVVKRHKFAGGARSHGSMFQISGSIGSSAFPSRVFKGMRMAGHMGQDQVTVRNLRILGIDKDENLLVVEGAVPGPKDATVFITMSKKPPRERRGFAGSSTVDPLKASKRAVAKKK</sequence>
<gene>
    <name evidence="1" type="primary">rplC</name>
    <name type="ordered locus">Acid345_1226</name>
</gene>
<reference key="1">
    <citation type="journal article" date="2009" name="Appl. Environ. Microbiol.">
        <title>Three genomes from the phylum Acidobacteria provide insight into the lifestyles of these microorganisms in soils.</title>
        <authorList>
            <person name="Ward N.L."/>
            <person name="Challacombe J.F."/>
            <person name="Janssen P.H."/>
            <person name="Henrissat B."/>
            <person name="Coutinho P.M."/>
            <person name="Wu M."/>
            <person name="Xie G."/>
            <person name="Haft D.H."/>
            <person name="Sait M."/>
            <person name="Badger J."/>
            <person name="Barabote R.D."/>
            <person name="Bradley B."/>
            <person name="Brettin T.S."/>
            <person name="Brinkac L.M."/>
            <person name="Bruce D."/>
            <person name="Creasy T."/>
            <person name="Daugherty S.C."/>
            <person name="Davidsen T.M."/>
            <person name="DeBoy R.T."/>
            <person name="Detter J.C."/>
            <person name="Dodson R.J."/>
            <person name="Durkin A.S."/>
            <person name="Ganapathy A."/>
            <person name="Gwinn-Giglio M."/>
            <person name="Han C.S."/>
            <person name="Khouri H."/>
            <person name="Kiss H."/>
            <person name="Kothari S.P."/>
            <person name="Madupu R."/>
            <person name="Nelson K.E."/>
            <person name="Nelson W.C."/>
            <person name="Paulsen I."/>
            <person name="Penn K."/>
            <person name="Ren Q."/>
            <person name="Rosovitz M.J."/>
            <person name="Selengut J.D."/>
            <person name="Shrivastava S."/>
            <person name="Sullivan S.A."/>
            <person name="Tapia R."/>
            <person name="Thompson L.S."/>
            <person name="Watkins K.L."/>
            <person name="Yang Q."/>
            <person name="Yu C."/>
            <person name="Zafar N."/>
            <person name="Zhou L."/>
            <person name="Kuske C.R."/>
        </authorList>
    </citation>
    <scope>NUCLEOTIDE SEQUENCE [LARGE SCALE GENOMIC DNA]</scope>
    <source>
        <strain>Ellin345</strain>
    </source>
</reference>
<comment type="function">
    <text evidence="1">One of the primary rRNA binding proteins, it binds directly near the 3'-end of the 23S rRNA, where it nucleates assembly of the 50S subunit.</text>
</comment>
<comment type="subunit">
    <text evidence="1">Part of the 50S ribosomal subunit. Forms a cluster with proteins L14 and L19.</text>
</comment>
<comment type="similarity">
    <text evidence="1">Belongs to the universal ribosomal protein uL3 family.</text>
</comment>
<name>RL3_KORVE</name>